<gene>
    <name type="primary">cav1</name>
    <name type="synonym">cav-1</name>
</gene>
<protein>
    <recommendedName>
        <fullName>Caveolin-1</fullName>
    </recommendedName>
</protein>
<reference key="1">
    <citation type="journal article" date="1999" name="FEBS Lett.">
        <title>Three receptor genes for plasminogen related growth factors in the genome of the puffer fish Fugu rubripes.</title>
        <authorList>
            <person name="Cottage A."/>
            <person name="Clark M."/>
            <person name="Hawker K."/>
            <person name="Umrania Y."/>
            <person name="Wheller D."/>
            <person name="Bishop M."/>
            <person name="Elgar G."/>
        </authorList>
    </citation>
    <scope>NUCLEOTIDE SEQUENCE [GENOMIC DNA]</scope>
</reference>
<reference key="2">
    <citation type="journal article" date="2003" name="Nature">
        <title>Comparative analyses of multi-species sequences from targeted genomic regions.</title>
        <authorList>
            <person name="Thomas J.W."/>
            <person name="Touchman J.W."/>
            <person name="Blakesley R.W."/>
            <person name="Bouffard G.G."/>
            <person name="Beckstrom-Sternberg S.M."/>
            <person name="Margulies E.H."/>
            <person name="Blanchette M."/>
            <person name="Siepel A.C."/>
            <person name="Thomas P.J."/>
            <person name="McDowell J.C."/>
            <person name="Maskeri B."/>
            <person name="Hansen N.F."/>
            <person name="Schwartz M.S."/>
            <person name="Weber R.J."/>
            <person name="Kent W.J."/>
            <person name="Karolchik D."/>
            <person name="Bruen T.C."/>
            <person name="Bevan R."/>
            <person name="Cutler D.J."/>
            <person name="Schwartz S."/>
            <person name="Elnitski L."/>
            <person name="Idol J.R."/>
            <person name="Prasad A.B."/>
            <person name="Lee-Lin S.-Q."/>
            <person name="Maduro V.V.B."/>
            <person name="Summers T.J."/>
            <person name="Portnoy M.E."/>
            <person name="Dietrich N.L."/>
            <person name="Akhter N."/>
            <person name="Ayele K."/>
            <person name="Benjamin B."/>
            <person name="Cariaga K."/>
            <person name="Brinkley C.P."/>
            <person name="Brooks S.Y."/>
            <person name="Granite S."/>
            <person name="Guan X."/>
            <person name="Gupta J."/>
            <person name="Haghighi P."/>
            <person name="Ho S.-L."/>
            <person name="Huang M.C."/>
            <person name="Karlins E."/>
            <person name="Laric P.L."/>
            <person name="Legaspi R."/>
            <person name="Lim M.J."/>
            <person name="Maduro Q.L."/>
            <person name="Masiello C.A."/>
            <person name="Mastrian S.D."/>
            <person name="McCloskey J.C."/>
            <person name="Pearson R."/>
            <person name="Stantripop S."/>
            <person name="Tiongson E.E."/>
            <person name="Tran J.T."/>
            <person name="Tsurgeon C."/>
            <person name="Vogt J.L."/>
            <person name="Walker M.A."/>
            <person name="Wetherby K.D."/>
            <person name="Wiggins L.S."/>
            <person name="Young A.C."/>
            <person name="Zhang L.-H."/>
            <person name="Osoegawa K."/>
            <person name="Zhu B."/>
            <person name="Zhao B."/>
            <person name="Shu C.L."/>
            <person name="De Jong P.J."/>
            <person name="Lawrence C.E."/>
            <person name="Smit A.F."/>
            <person name="Chakravarti A."/>
            <person name="Haussler D."/>
            <person name="Green P."/>
            <person name="Miller W."/>
            <person name="Green E.D."/>
        </authorList>
    </citation>
    <scope>NUCLEOTIDE SEQUENCE [LARGE SCALE GENOMIC DNA]</scope>
</reference>
<sequence>MTGGLRDGEKEEEFLHSPFIRKQGNIYKPYNKDMDYDILNEKSMEDVHTKEIDLVNRDPTHLNDDVVKVDFEDVIAEPAGTYSFDGVWKASFTTFTVTKYWCYRLLTALVGIPLALIWGIFFAILSFIHIWAVVPCVKSYLIEIHCISRVYSICVHTFCDPLFEAMGKCLGGVRIRTSKEV</sequence>
<feature type="chain" id="PRO_0000144135" description="Caveolin-1">
    <location>
        <begin position="1"/>
        <end position="181"/>
    </location>
</feature>
<feature type="topological domain" description="Cytoplasmic" evidence="3">
    <location>
        <begin position="1"/>
        <end position="107"/>
    </location>
</feature>
<feature type="intramembrane region" description="Helical" evidence="3">
    <location>
        <begin position="108"/>
        <end position="128"/>
    </location>
</feature>
<feature type="topological domain" description="Cytoplasmic" evidence="3">
    <location>
        <begin position="129"/>
        <end position="181"/>
    </location>
</feature>
<feature type="lipid moiety-binding region" description="S-palmitoyl cysteine" evidence="1">
    <location>
        <position position="136"/>
    </location>
</feature>
<feature type="lipid moiety-binding region" description="S-palmitoyl cysteine" evidence="1">
    <location>
        <position position="146"/>
    </location>
</feature>
<feature type="lipid moiety-binding region" description="S-palmitoyl cysteine" evidence="1">
    <location>
        <position position="159"/>
    </location>
</feature>
<feature type="sequence conflict" description="In Ref. 2; AAL40364." evidence="4" ref="2">
    <original>Y</original>
    <variation>N</variation>
    <location>
        <position position="30"/>
    </location>
</feature>
<feature type="sequence conflict" description="In Ref. 2." evidence="4" ref="2">
    <original>Y</original>
    <variation>N</variation>
    <location>
        <position position="36"/>
    </location>
</feature>
<feature type="sequence conflict" description="In Ref. 2." evidence="4" ref="2">
    <original>I</original>
    <variation>S</variation>
    <location>
        <position position="38"/>
    </location>
</feature>
<feature type="sequence conflict" description="In Ref. 2; AAL40364." evidence="4" ref="2">
    <original>T</original>
    <variation>K</variation>
    <location>
        <position position="60"/>
    </location>
</feature>
<comment type="function">
    <text evidence="2">May act as a positive regulator of T-cell coactivation. May act as a scaffolding protein within caveolar membranes. Interacts directly with G-protein alpha subunits and can functionally regulate their activity (By similarity).</text>
</comment>
<comment type="subunit">
    <text evidence="2">Homooligomer.</text>
</comment>
<comment type="subcellular location">
    <subcellularLocation>
        <location evidence="1">Golgi apparatus membrane</location>
        <topology evidence="1">Peripheral membrane protein</topology>
    </subcellularLocation>
    <subcellularLocation>
        <location evidence="1">Cell membrane</location>
        <topology evidence="1">Peripheral membrane protein</topology>
    </subcellularLocation>
    <subcellularLocation>
        <location evidence="1">Membrane</location>
        <location evidence="1">Caveola</location>
        <topology evidence="1">Peripheral membrane protein</topology>
    </subcellularLocation>
    <subcellularLocation>
        <location evidence="2">Membrane raft</location>
    </subcellularLocation>
    <text evidence="1">Potential hairpin-like structure in the membrane. Membrane protein of caveolae (By similarity).</text>
</comment>
<comment type="similarity">
    <text evidence="4">Belongs to the caveolin family.</text>
</comment>
<evidence type="ECO:0000250" key="1"/>
<evidence type="ECO:0000250" key="2">
    <source>
        <dbReference type="UniProtKB" id="Q03135"/>
    </source>
</evidence>
<evidence type="ECO:0000255" key="3"/>
<evidence type="ECO:0000305" key="4"/>
<keyword id="KW-1003">Cell membrane</keyword>
<keyword id="KW-0333">Golgi apparatus</keyword>
<keyword id="KW-0449">Lipoprotein</keyword>
<keyword id="KW-0472">Membrane</keyword>
<keyword id="KW-0564">Palmitate</keyword>
<keyword id="KW-1185">Reference proteome</keyword>
<dbReference type="EMBL" id="AJ010316">
    <property type="protein sequence ID" value="CAA09082.1"/>
    <property type="molecule type" value="Genomic_DNA"/>
</dbReference>
<dbReference type="EMBL" id="AC090119">
    <property type="protein sequence ID" value="AAL40364.1"/>
    <property type="molecule type" value="Genomic_DNA"/>
</dbReference>
<dbReference type="RefSeq" id="NP_001163827.1">
    <property type="nucleotide sequence ID" value="NM_001170356.1"/>
</dbReference>
<dbReference type="FunCoup" id="Q9YGM8">
    <property type="interactions" value="843"/>
</dbReference>
<dbReference type="STRING" id="31033.ENSTRUP00000053155"/>
<dbReference type="GeneID" id="100137154"/>
<dbReference type="KEGG" id="tru:100137154"/>
<dbReference type="CTD" id="857"/>
<dbReference type="eggNOG" id="ENOG502QUK5">
    <property type="taxonomic scope" value="Eukaryota"/>
</dbReference>
<dbReference type="HOGENOM" id="CLU_102582_0_0_1"/>
<dbReference type="InParanoid" id="Q9YGM8"/>
<dbReference type="OrthoDB" id="5917823at2759"/>
<dbReference type="TreeFam" id="TF315736"/>
<dbReference type="Proteomes" id="UP000005226">
    <property type="component" value="Unplaced"/>
</dbReference>
<dbReference type="GO" id="GO:0005901">
    <property type="term" value="C:caveola"/>
    <property type="evidence" value="ECO:0000250"/>
    <property type="project" value="UniProtKB"/>
</dbReference>
<dbReference type="GO" id="GO:0005783">
    <property type="term" value="C:endoplasmic reticulum"/>
    <property type="evidence" value="ECO:0000250"/>
    <property type="project" value="HGNC-UCL"/>
</dbReference>
<dbReference type="GO" id="GO:0005768">
    <property type="term" value="C:endosome"/>
    <property type="evidence" value="ECO:0000250"/>
    <property type="project" value="UniProtKB"/>
</dbReference>
<dbReference type="GO" id="GO:0005925">
    <property type="term" value="C:focal adhesion"/>
    <property type="evidence" value="ECO:0007669"/>
    <property type="project" value="TreeGrafter"/>
</dbReference>
<dbReference type="GO" id="GO:0000139">
    <property type="term" value="C:Golgi membrane"/>
    <property type="evidence" value="ECO:0000250"/>
    <property type="project" value="HGNC-UCL"/>
</dbReference>
<dbReference type="GO" id="GO:0045121">
    <property type="term" value="C:membrane raft"/>
    <property type="evidence" value="ECO:0000250"/>
    <property type="project" value="HGNC-UCL"/>
</dbReference>
<dbReference type="GO" id="GO:0048471">
    <property type="term" value="C:perinuclear region of cytoplasm"/>
    <property type="evidence" value="ECO:0007669"/>
    <property type="project" value="TreeGrafter"/>
</dbReference>
<dbReference type="GO" id="GO:0042383">
    <property type="term" value="C:sarcolemma"/>
    <property type="evidence" value="ECO:0007669"/>
    <property type="project" value="TreeGrafter"/>
</dbReference>
<dbReference type="GO" id="GO:0060090">
    <property type="term" value="F:molecular adaptor activity"/>
    <property type="evidence" value="ECO:0007669"/>
    <property type="project" value="TreeGrafter"/>
</dbReference>
<dbReference type="GO" id="GO:0019901">
    <property type="term" value="F:protein kinase binding"/>
    <property type="evidence" value="ECO:0007669"/>
    <property type="project" value="TreeGrafter"/>
</dbReference>
<dbReference type="GO" id="GO:0044325">
    <property type="term" value="F:transmembrane transporter binding"/>
    <property type="evidence" value="ECO:0007669"/>
    <property type="project" value="TreeGrafter"/>
</dbReference>
<dbReference type="GO" id="GO:0070836">
    <property type="term" value="P:caveola assembly"/>
    <property type="evidence" value="ECO:0007669"/>
    <property type="project" value="InterPro"/>
</dbReference>
<dbReference type="GO" id="GO:0030154">
    <property type="term" value="P:cell differentiation"/>
    <property type="evidence" value="ECO:0007669"/>
    <property type="project" value="TreeGrafter"/>
</dbReference>
<dbReference type="GO" id="GO:0001937">
    <property type="term" value="P:negative regulation of endothelial cell proliferation"/>
    <property type="evidence" value="ECO:0007669"/>
    <property type="project" value="TreeGrafter"/>
</dbReference>
<dbReference type="GO" id="GO:0051480">
    <property type="term" value="P:regulation of cytosolic calcium ion concentration"/>
    <property type="evidence" value="ECO:0007669"/>
    <property type="project" value="TreeGrafter"/>
</dbReference>
<dbReference type="GO" id="GO:0031295">
    <property type="term" value="P:T cell costimulation"/>
    <property type="evidence" value="ECO:0000250"/>
    <property type="project" value="UniProtKB"/>
</dbReference>
<dbReference type="InterPro" id="IPR001612">
    <property type="entry name" value="Caveolin"/>
</dbReference>
<dbReference type="InterPro" id="IPR018361">
    <property type="entry name" value="Caveolin_CS"/>
</dbReference>
<dbReference type="PANTHER" id="PTHR10844">
    <property type="entry name" value="CAVEOLIN"/>
    <property type="match status" value="1"/>
</dbReference>
<dbReference type="PANTHER" id="PTHR10844:SF18">
    <property type="entry name" value="CAVEOLIN-1"/>
    <property type="match status" value="1"/>
</dbReference>
<dbReference type="Pfam" id="PF01146">
    <property type="entry name" value="Caveolin"/>
    <property type="match status" value="1"/>
</dbReference>
<dbReference type="PROSITE" id="PS01210">
    <property type="entry name" value="CAVEOLIN"/>
    <property type="match status" value="1"/>
</dbReference>
<accession>Q9YGM8</accession>
<accession>Q8UW43</accession>
<organism>
    <name type="scientific">Takifugu rubripes</name>
    <name type="common">Japanese pufferfish</name>
    <name type="synonym">Fugu rubripes</name>
    <dbReference type="NCBI Taxonomy" id="31033"/>
    <lineage>
        <taxon>Eukaryota</taxon>
        <taxon>Metazoa</taxon>
        <taxon>Chordata</taxon>
        <taxon>Craniata</taxon>
        <taxon>Vertebrata</taxon>
        <taxon>Euteleostomi</taxon>
        <taxon>Actinopterygii</taxon>
        <taxon>Neopterygii</taxon>
        <taxon>Teleostei</taxon>
        <taxon>Neoteleostei</taxon>
        <taxon>Acanthomorphata</taxon>
        <taxon>Eupercaria</taxon>
        <taxon>Tetraodontiformes</taxon>
        <taxon>Tetradontoidea</taxon>
        <taxon>Tetraodontidae</taxon>
        <taxon>Takifugu</taxon>
    </lineage>
</organism>
<name>CAV1_TAKRU</name>
<proteinExistence type="inferred from homology"/>